<comment type="function">
    <text evidence="1">Binds to 23S rRNA. Forms part of two intersubunit bridges in the 70S ribosome.</text>
</comment>
<comment type="subunit">
    <text evidence="1">Part of the 50S ribosomal subunit. Forms a cluster with proteins L3 and L19. In the 70S ribosome, L14 and L19 interact and together make contacts with the 16S rRNA in bridges B5 and B8.</text>
</comment>
<comment type="similarity">
    <text evidence="1">Belongs to the universal ribosomal protein uL14 family.</text>
</comment>
<comment type="sequence caution" evidence="2">
    <conflict type="erroneous initiation">
        <sequence resource="EMBL-CDS" id="ABF37008"/>
    </conflict>
</comment>
<organism>
    <name type="scientific">Streptococcus pyogenes serotype M4 (strain MGAS10750)</name>
    <dbReference type="NCBI Taxonomy" id="370554"/>
    <lineage>
        <taxon>Bacteria</taxon>
        <taxon>Bacillati</taxon>
        <taxon>Bacillota</taxon>
        <taxon>Bacilli</taxon>
        <taxon>Lactobacillales</taxon>
        <taxon>Streptococcaceae</taxon>
        <taxon>Streptococcus</taxon>
    </lineage>
</organism>
<sequence length="122" mass="13061">MIQQETRLKVADNSGAREILTIKVLGGSGRKFANIGDVIVASVKQATPGGAVKKGDVVKAVIVRTKTGARRPDGSYIKFDDNAAVIIRDDKTPRGTRIFGPVARELREGGYMKIVSLAPEVL</sequence>
<gene>
    <name evidence="1" type="primary">rplN</name>
    <name type="ordered locus">MGAS10750_Spy0057/MGAS10750_Spy0058</name>
</gene>
<proteinExistence type="inferred from homology"/>
<accession>Q1J904</accession>
<accession>Q1J903</accession>
<keyword id="KW-0687">Ribonucleoprotein</keyword>
<keyword id="KW-0689">Ribosomal protein</keyword>
<keyword id="KW-0694">RNA-binding</keyword>
<keyword id="KW-0699">rRNA-binding</keyword>
<protein>
    <recommendedName>
        <fullName evidence="1">Large ribosomal subunit protein uL14</fullName>
    </recommendedName>
    <alternativeName>
        <fullName evidence="2">50S ribosomal protein L14</fullName>
    </alternativeName>
</protein>
<name>RL14_STRPF</name>
<feature type="chain" id="PRO_1000055722" description="Large ribosomal subunit protein uL14">
    <location>
        <begin position="1"/>
        <end position="122"/>
    </location>
</feature>
<evidence type="ECO:0000255" key="1">
    <source>
        <dbReference type="HAMAP-Rule" id="MF_01367"/>
    </source>
</evidence>
<evidence type="ECO:0000305" key="2"/>
<dbReference type="EMBL" id="CP000262">
    <property type="protein sequence ID" value="ABF37007.1"/>
    <property type="molecule type" value="Genomic_DNA"/>
</dbReference>
<dbReference type="EMBL" id="CP000262">
    <property type="protein sequence ID" value="ABF37008.1"/>
    <property type="status" value="ALT_INIT"/>
    <property type="molecule type" value="Genomic_DNA"/>
</dbReference>
<dbReference type="SMR" id="Q1J904"/>
<dbReference type="KEGG" id="spi:MGAS10750_Spy0057"/>
<dbReference type="KEGG" id="spi:MGAS10750_Spy0058"/>
<dbReference type="HOGENOM" id="CLU_095071_2_1_9"/>
<dbReference type="Proteomes" id="UP000002434">
    <property type="component" value="Chromosome"/>
</dbReference>
<dbReference type="GO" id="GO:0022625">
    <property type="term" value="C:cytosolic large ribosomal subunit"/>
    <property type="evidence" value="ECO:0007669"/>
    <property type="project" value="TreeGrafter"/>
</dbReference>
<dbReference type="GO" id="GO:0070180">
    <property type="term" value="F:large ribosomal subunit rRNA binding"/>
    <property type="evidence" value="ECO:0007669"/>
    <property type="project" value="TreeGrafter"/>
</dbReference>
<dbReference type="GO" id="GO:0003735">
    <property type="term" value="F:structural constituent of ribosome"/>
    <property type="evidence" value="ECO:0007669"/>
    <property type="project" value="InterPro"/>
</dbReference>
<dbReference type="GO" id="GO:0006412">
    <property type="term" value="P:translation"/>
    <property type="evidence" value="ECO:0007669"/>
    <property type="project" value="UniProtKB-UniRule"/>
</dbReference>
<dbReference type="CDD" id="cd00337">
    <property type="entry name" value="Ribosomal_uL14"/>
    <property type="match status" value="1"/>
</dbReference>
<dbReference type="FunFam" id="2.40.150.20:FF:000001">
    <property type="entry name" value="50S ribosomal protein L14"/>
    <property type="match status" value="1"/>
</dbReference>
<dbReference type="Gene3D" id="2.40.150.20">
    <property type="entry name" value="Ribosomal protein L14"/>
    <property type="match status" value="1"/>
</dbReference>
<dbReference type="HAMAP" id="MF_01367">
    <property type="entry name" value="Ribosomal_uL14"/>
    <property type="match status" value="1"/>
</dbReference>
<dbReference type="InterPro" id="IPR000218">
    <property type="entry name" value="Ribosomal_uL14"/>
</dbReference>
<dbReference type="InterPro" id="IPR005745">
    <property type="entry name" value="Ribosomal_uL14_bac-type"/>
</dbReference>
<dbReference type="InterPro" id="IPR019972">
    <property type="entry name" value="Ribosomal_uL14_CS"/>
</dbReference>
<dbReference type="InterPro" id="IPR036853">
    <property type="entry name" value="Ribosomal_uL14_sf"/>
</dbReference>
<dbReference type="NCBIfam" id="TIGR01067">
    <property type="entry name" value="rplN_bact"/>
    <property type="match status" value="1"/>
</dbReference>
<dbReference type="PANTHER" id="PTHR11761">
    <property type="entry name" value="50S/60S RIBOSOMAL PROTEIN L14/L23"/>
    <property type="match status" value="1"/>
</dbReference>
<dbReference type="PANTHER" id="PTHR11761:SF3">
    <property type="entry name" value="LARGE RIBOSOMAL SUBUNIT PROTEIN UL14M"/>
    <property type="match status" value="1"/>
</dbReference>
<dbReference type="Pfam" id="PF00238">
    <property type="entry name" value="Ribosomal_L14"/>
    <property type="match status" value="1"/>
</dbReference>
<dbReference type="SMART" id="SM01374">
    <property type="entry name" value="Ribosomal_L14"/>
    <property type="match status" value="1"/>
</dbReference>
<dbReference type="SUPFAM" id="SSF50193">
    <property type="entry name" value="Ribosomal protein L14"/>
    <property type="match status" value="1"/>
</dbReference>
<dbReference type="PROSITE" id="PS00049">
    <property type="entry name" value="RIBOSOMAL_L14"/>
    <property type="match status" value="1"/>
</dbReference>
<reference key="1">
    <citation type="journal article" date="2006" name="Proc. Natl. Acad. Sci. U.S.A.">
        <title>Molecular genetic anatomy of inter- and intraserotype variation in the human bacterial pathogen group A Streptococcus.</title>
        <authorList>
            <person name="Beres S.B."/>
            <person name="Richter E.W."/>
            <person name="Nagiec M.J."/>
            <person name="Sumby P."/>
            <person name="Porcella S.F."/>
            <person name="DeLeo F.R."/>
            <person name="Musser J.M."/>
        </authorList>
    </citation>
    <scope>NUCLEOTIDE SEQUENCE [LARGE SCALE GENOMIC DNA]</scope>
    <source>
        <strain>MGAS10750</strain>
    </source>
</reference>